<sequence>MTSHPVFIDLSLDEQVQELRKYFKKLGAEISSEKSNKGVEDDLHKIIGVCDVCFKDGEPSQIDGILNSIVSIMITIPLDRGENIVLAYCEKMTKAPNLPLGKVCLQSLWRLFNNLDTASPLRYHVYYHLVQVAKQCEQVLEVFSGVDQLKSQFANCPPSSEQMQKLYRLLHDVTKDTNLELSSKVMIELLGTYTADNACVAREDAMKCIVTALADPNTFLLDPLLSLKPVRFLEGDLIHDLLSIFVSEKLPAYVQFYEDHREFVNSQGLNHEQNMKKMRLLTFMQLAESSPEMTFETLTKELQINEDEVEPFVIEVLKTKLVRARLDQANQKVHISSTMHRTFGAPQWEQLRDLLQAWKENLSTVREGLTSVSSAQLDLARSQKLIH</sequence>
<feature type="chain" id="PRO_0000366003" description="Eukaryotic translation initiation factor 3 subunit M">
    <location>
        <begin position="1"/>
        <end position="387"/>
    </location>
</feature>
<feature type="domain" description="PCI" evidence="2">
    <location>
        <begin position="181"/>
        <end position="340"/>
    </location>
</feature>
<comment type="function">
    <text evidence="1">Component of the eukaryotic translation initiation factor 3 (eIF-3) complex, which is involved in protein synthesis of a specialized repertoire of mRNAs and, together with other initiation factors, stimulates binding of mRNA and methionyl-tRNAi to the 40S ribosome. The eIF-3 complex specifically targets and initiates translation of a subset of mRNAs involved in cell proliferation.</text>
</comment>
<comment type="subunit">
    <text evidence="1">Component of the eukaryotic translation initiation factor 3 (eIF-3) complex. The eIF-3 complex interacts with pix.</text>
</comment>
<comment type="subcellular location">
    <subcellularLocation>
        <location evidence="1">Cytoplasm</location>
    </subcellularLocation>
    <subcellularLocation>
        <location evidence="1">Golgi apparatus</location>
    </subcellularLocation>
</comment>
<comment type="similarity">
    <text evidence="1">Belongs to the eIF-3 subunit M family.</text>
</comment>
<proteinExistence type="inferred from homology"/>
<accession>B4HR14</accession>
<reference key="1">
    <citation type="journal article" date="2007" name="Nature">
        <title>Evolution of genes and genomes on the Drosophila phylogeny.</title>
        <authorList>
            <consortium name="Drosophila 12 genomes consortium"/>
        </authorList>
    </citation>
    <scope>NUCLEOTIDE SEQUENCE [LARGE SCALE GENOMIC DNA]</scope>
    <source>
        <strain>Rob3c / Tucson 14021-0248.25</strain>
    </source>
</reference>
<organism>
    <name type="scientific">Drosophila sechellia</name>
    <name type="common">Fruit fly</name>
    <dbReference type="NCBI Taxonomy" id="7238"/>
    <lineage>
        <taxon>Eukaryota</taxon>
        <taxon>Metazoa</taxon>
        <taxon>Ecdysozoa</taxon>
        <taxon>Arthropoda</taxon>
        <taxon>Hexapoda</taxon>
        <taxon>Insecta</taxon>
        <taxon>Pterygota</taxon>
        <taxon>Neoptera</taxon>
        <taxon>Endopterygota</taxon>
        <taxon>Diptera</taxon>
        <taxon>Brachycera</taxon>
        <taxon>Muscomorpha</taxon>
        <taxon>Ephydroidea</taxon>
        <taxon>Drosophilidae</taxon>
        <taxon>Drosophila</taxon>
        <taxon>Sophophora</taxon>
    </lineage>
</organism>
<protein>
    <recommendedName>
        <fullName evidence="1">Eukaryotic translation initiation factor 3 subunit M</fullName>
        <shortName evidence="1">eIF3m</shortName>
    </recommendedName>
    <alternativeName>
        <fullName evidence="1">Transport and Golgi organization protein 7</fullName>
        <shortName evidence="1">Tango-7</shortName>
    </alternativeName>
</protein>
<name>EIF3M_DROSE</name>
<evidence type="ECO:0000255" key="1">
    <source>
        <dbReference type="HAMAP-Rule" id="MF_03012"/>
    </source>
</evidence>
<evidence type="ECO:0000255" key="2">
    <source>
        <dbReference type="PROSITE-ProRule" id="PRU01185"/>
    </source>
</evidence>
<dbReference type="EMBL" id="CH480816">
    <property type="protein sequence ID" value="EDW47811.1"/>
    <property type="molecule type" value="Genomic_DNA"/>
</dbReference>
<dbReference type="SMR" id="B4HR14"/>
<dbReference type="STRING" id="7238.B4HR14"/>
<dbReference type="EnsemblMetazoa" id="FBtr0203213">
    <property type="protein sequence ID" value="FBpp0201705"/>
    <property type="gene ID" value="FBgn0175111"/>
</dbReference>
<dbReference type="EnsemblMetazoa" id="XM_002033762.2">
    <property type="protein sequence ID" value="XP_002033798.1"/>
    <property type="gene ID" value="LOC6609095"/>
</dbReference>
<dbReference type="GeneID" id="6609095"/>
<dbReference type="KEGG" id="dse:6609095"/>
<dbReference type="CTD" id="10480"/>
<dbReference type="HOGENOM" id="CLU_035254_1_0_1"/>
<dbReference type="OMA" id="VCLKALW"/>
<dbReference type="OrthoDB" id="7873at7215"/>
<dbReference type="PhylomeDB" id="B4HR14"/>
<dbReference type="Proteomes" id="UP000001292">
    <property type="component" value="Unassembled WGS sequence"/>
</dbReference>
<dbReference type="GO" id="GO:0005829">
    <property type="term" value="C:cytosol"/>
    <property type="evidence" value="ECO:0007669"/>
    <property type="project" value="EnsemblMetazoa"/>
</dbReference>
<dbReference type="GO" id="GO:0016282">
    <property type="term" value="C:eukaryotic 43S preinitiation complex"/>
    <property type="evidence" value="ECO:0007669"/>
    <property type="project" value="UniProtKB-UniRule"/>
</dbReference>
<dbReference type="GO" id="GO:0033290">
    <property type="term" value="C:eukaryotic 48S preinitiation complex"/>
    <property type="evidence" value="ECO:0007669"/>
    <property type="project" value="UniProtKB-UniRule"/>
</dbReference>
<dbReference type="GO" id="GO:0071541">
    <property type="term" value="C:eukaryotic translation initiation factor 3 complex, eIF3m"/>
    <property type="evidence" value="ECO:0007669"/>
    <property type="project" value="UniProtKB-UniRule"/>
</dbReference>
<dbReference type="GO" id="GO:0005794">
    <property type="term" value="C:Golgi apparatus"/>
    <property type="evidence" value="ECO:0007669"/>
    <property type="project" value="UniProtKB-SubCell"/>
</dbReference>
<dbReference type="GO" id="GO:0070865">
    <property type="term" value="C:investment cone"/>
    <property type="evidence" value="ECO:0007669"/>
    <property type="project" value="EnsemblMetazoa"/>
</dbReference>
<dbReference type="GO" id="GO:0089720">
    <property type="term" value="F:caspase binding"/>
    <property type="evidence" value="ECO:0007669"/>
    <property type="project" value="EnsemblMetazoa"/>
</dbReference>
<dbReference type="GO" id="GO:0140608">
    <property type="term" value="F:cysteine-type endopeptidase activator activity"/>
    <property type="evidence" value="ECO:0007669"/>
    <property type="project" value="EnsemblMetazoa"/>
</dbReference>
<dbReference type="GO" id="GO:0003743">
    <property type="term" value="F:translation initiation factor activity"/>
    <property type="evidence" value="ECO:0007669"/>
    <property type="project" value="UniProtKB-UniRule"/>
</dbReference>
<dbReference type="GO" id="GO:0001732">
    <property type="term" value="P:formation of cytoplasmic translation initiation complex"/>
    <property type="evidence" value="ECO:0007669"/>
    <property type="project" value="UniProtKB-UniRule"/>
</dbReference>
<dbReference type="GO" id="GO:0007030">
    <property type="term" value="P:Golgi organization"/>
    <property type="evidence" value="ECO:0007669"/>
    <property type="project" value="EnsemblMetazoa"/>
</dbReference>
<dbReference type="GO" id="GO:0009306">
    <property type="term" value="P:protein secretion"/>
    <property type="evidence" value="ECO:0007669"/>
    <property type="project" value="EnsemblMetazoa"/>
</dbReference>
<dbReference type="GO" id="GO:0007291">
    <property type="term" value="P:sperm individualization"/>
    <property type="evidence" value="ECO:0007669"/>
    <property type="project" value="EnsemblMetazoa"/>
</dbReference>
<dbReference type="HAMAP" id="MF_03012">
    <property type="entry name" value="eIF3m"/>
    <property type="match status" value="1"/>
</dbReference>
<dbReference type="InterPro" id="IPR045237">
    <property type="entry name" value="COPS7/eIF3m"/>
</dbReference>
<dbReference type="InterPro" id="IPR027528">
    <property type="entry name" value="eIF3m"/>
</dbReference>
<dbReference type="InterPro" id="IPR040750">
    <property type="entry name" value="eIF3m_C_helix"/>
</dbReference>
<dbReference type="InterPro" id="IPR000717">
    <property type="entry name" value="PCI_dom"/>
</dbReference>
<dbReference type="InterPro" id="IPR036390">
    <property type="entry name" value="WH_DNA-bd_sf"/>
</dbReference>
<dbReference type="PANTHER" id="PTHR15350">
    <property type="entry name" value="COP9 SIGNALOSOME COMPLEX SUBUNIT 7/DENDRITIC CELL PROTEIN GA17"/>
    <property type="match status" value="1"/>
</dbReference>
<dbReference type="PANTHER" id="PTHR15350:SF2">
    <property type="entry name" value="EUKARYOTIC TRANSLATION INITIATION FACTOR 3 SUBUNIT M"/>
    <property type="match status" value="1"/>
</dbReference>
<dbReference type="Pfam" id="PF18005">
    <property type="entry name" value="eIF3m_C_helix"/>
    <property type="match status" value="1"/>
</dbReference>
<dbReference type="Pfam" id="PF01399">
    <property type="entry name" value="PCI"/>
    <property type="match status" value="1"/>
</dbReference>
<dbReference type="SMART" id="SM00088">
    <property type="entry name" value="PINT"/>
    <property type="match status" value="1"/>
</dbReference>
<dbReference type="SUPFAM" id="SSF46785">
    <property type="entry name" value="Winged helix' DNA-binding domain"/>
    <property type="match status" value="1"/>
</dbReference>
<dbReference type="PROSITE" id="PS50250">
    <property type="entry name" value="PCI"/>
    <property type="match status" value="1"/>
</dbReference>
<keyword id="KW-0963">Cytoplasm</keyword>
<keyword id="KW-0333">Golgi apparatus</keyword>
<keyword id="KW-0396">Initiation factor</keyword>
<keyword id="KW-0648">Protein biosynthesis</keyword>
<keyword id="KW-1185">Reference proteome</keyword>
<gene>
    <name evidence="1" type="primary">Tango7</name>
    <name type="ORF">GM20228</name>
</gene>